<reference key="1">
    <citation type="journal article" date="2007" name="J. Bacteriol.">
        <title>The complete genome sequence of Roseobacter denitrificans reveals a mixotrophic rather than photosynthetic metabolism.</title>
        <authorList>
            <person name="Swingley W.D."/>
            <person name="Sadekar S."/>
            <person name="Mastrian S.D."/>
            <person name="Matthies H.J."/>
            <person name="Hao J."/>
            <person name="Ramos H."/>
            <person name="Acharya C.R."/>
            <person name="Conrad A.L."/>
            <person name="Taylor H.L."/>
            <person name="Dejesa L.C."/>
            <person name="Shah M.K."/>
            <person name="O'Huallachain M.E."/>
            <person name="Lince M.T."/>
            <person name="Blankenship R.E."/>
            <person name="Beatty J.T."/>
            <person name="Touchman J.W."/>
        </authorList>
    </citation>
    <scope>NUCLEOTIDE SEQUENCE [LARGE SCALE GENOMIC DNA]</scope>
    <source>
        <strain>ATCC 33942 / OCh 114</strain>
    </source>
</reference>
<evidence type="ECO:0000250" key="1"/>
<evidence type="ECO:0000255" key="2">
    <source>
        <dbReference type="HAMAP-Rule" id="MF_01346"/>
    </source>
</evidence>
<name>ATPA_ROSDO</name>
<keyword id="KW-0066">ATP synthesis</keyword>
<keyword id="KW-0067">ATP-binding</keyword>
<keyword id="KW-0997">Cell inner membrane</keyword>
<keyword id="KW-1003">Cell membrane</keyword>
<keyword id="KW-0139">CF(1)</keyword>
<keyword id="KW-0375">Hydrogen ion transport</keyword>
<keyword id="KW-0406">Ion transport</keyword>
<keyword id="KW-0472">Membrane</keyword>
<keyword id="KW-0547">Nucleotide-binding</keyword>
<keyword id="KW-1185">Reference proteome</keyword>
<keyword id="KW-1278">Translocase</keyword>
<keyword id="KW-0813">Transport</keyword>
<accession>Q162S7</accession>
<protein>
    <recommendedName>
        <fullName evidence="2">ATP synthase subunit alpha</fullName>
        <ecNumber evidence="2">7.1.2.2</ecNumber>
    </recommendedName>
    <alternativeName>
        <fullName evidence="2">ATP synthase F1 sector subunit alpha</fullName>
    </alternativeName>
    <alternativeName>
        <fullName evidence="2">F-ATPase subunit alpha</fullName>
    </alternativeName>
</protein>
<dbReference type="EC" id="7.1.2.2" evidence="2"/>
<dbReference type="EMBL" id="CP000362">
    <property type="protein sequence ID" value="ABG33016.1"/>
    <property type="molecule type" value="Genomic_DNA"/>
</dbReference>
<dbReference type="RefSeq" id="WP_011569629.1">
    <property type="nucleotide sequence ID" value="NC_008209.1"/>
</dbReference>
<dbReference type="SMR" id="Q162S7"/>
<dbReference type="STRING" id="375451.RD1_3535"/>
<dbReference type="KEGG" id="rde:RD1_3535"/>
<dbReference type="eggNOG" id="COG0056">
    <property type="taxonomic scope" value="Bacteria"/>
</dbReference>
<dbReference type="HOGENOM" id="CLU_010091_2_1_5"/>
<dbReference type="OrthoDB" id="9803053at2"/>
<dbReference type="Proteomes" id="UP000007029">
    <property type="component" value="Chromosome"/>
</dbReference>
<dbReference type="GO" id="GO:0005886">
    <property type="term" value="C:plasma membrane"/>
    <property type="evidence" value="ECO:0007669"/>
    <property type="project" value="UniProtKB-SubCell"/>
</dbReference>
<dbReference type="GO" id="GO:0045259">
    <property type="term" value="C:proton-transporting ATP synthase complex"/>
    <property type="evidence" value="ECO:0007669"/>
    <property type="project" value="UniProtKB-KW"/>
</dbReference>
<dbReference type="GO" id="GO:0043531">
    <property type="term" value="F:ADP binding"/>
    <property type="evidence" value="ECO:0007669"/>
    <property type="project" value="TreeGrafter"/>
</dbReference>
<dbReference type="GO" id="GO:0005524">
    <property type="term" value="F:ATP binding"/>
    <property type="evidence" value="ECO:0007669"/>
    <property type="project" value="UniProtKB-UniRule"/>
</dbReference>
<dbReference type="GO" id="GO:0046933">
    <property type="term" value="F:proton-transporting ATP synthase activity, rotational mechanism"/>
    <property type="evidence" value="ECO:0007669"/>
    <property type="project" value="UniProtKB-UniRule"/>
</dbReference>
<dbReference type="CDD" id="cd18113">
    <property type="entry name" value="ATP-synt_F1_alpha_C"/>
    <property type="match status" value="1"/>
</dbReference>
<dbReference type="CDD" id="cd18116">
    <property type="entry name" value="ATP-synt_F1_alpha_N"/>
    <property type="match status" value="1"/>
</dbReference>
<dbReference type="CDD" id="cd01132">
    <property type="entry name" value="F1-ATPase_alpha_CD"/>
    <property type="match status" value="1"/>
</dbReference>
<dbReference type="FunFam" id="1.20.150.20:FF:000001">
    <property type="entry name" value="ATP synthase subunit alpha"/>
    <property type="match status" value="1"/>
</dbReference>
<dbReference type="FunFam" id="2.40.30.20:FF:000001">
    <property type="entry name" value="ATP synthase subunit alpha"/>
    <property type="match status" value="1"/>
</dbReference>
<dbReference type="FunFam" id="3.40.50.300:FF:002432">
    <property type="entry name" value="ATP synthase subunit alpha, mitochondrial"/>
    <property type="match status" value="1"/>
</dbReference>
<dbReference type="Gene3D" id="2.40.30.20">
    <property type="match status" value="1"/>
</dbReference>
<dbReference type="Gene3D" id="1.20.150.20">
    <property type="entry name" value="ATP synthase alpha/beta chain, C-terminal domain"/>
    <property type="match status" value="1"/>
</dbReference>
<dbReference type="Gene3D" id="3.40.50.300">
    <property type="entry name" value="P-loop containing nucleotide triphosphate hydrolases"/>
    <property type="match status" value="1"/>
</dbReference>
<dbReference type="HAMAP" id="MF_01346">
    <property type="entry name" value="ATP_synth_alpha_bact"/>
    <property type="match status" value="1"/>
</dbReference>
<dbReference type="InterPro" id="IPR023366">
    <property type="entry name" value="ATP_synth_asu-like_sf"/>
</dbReference>
<dbReference type="InterPro" id="IPR000793">
    <property type="entry name" value="ATP_synth_asu_C"/>
</dbReference>
<dbReference type="InterPro" id="IPR038376">
    <property type="entry name" value="ATP_synth_asu_C_sf"/>
</dbReference>
<dbReference type="InterPro" id="IPR033732">
    <property type="entry name" value="ATP_synth_F1_a_nt-bd_dom"/>
</dbReference>
<dbReference type="InterPro" id="IPR005294">
    <property type="entry name" value="ATP_synth_F1_asu"/>
</dbReference>
<dbReference type="InterPro" id="IPR020003">
    <property type="entry name" value="ATPase_a/bsu_AS"/>
</dbReference>
<dbReference type="InterPro" id="IPR004100">
    <property type="entry name" value="ATPase_F1/V1/A1_a/bsu_N"/>
</dbReference>
<dbReference type="InterPro" id="IPR036121">
    <property type="entry name" value="ATPase_F1/V1/A1_a/bsu_N_sf"/>
</dbReference>
<dbReference type="InterPro" id="IPR000194">
    <property type="entry name" value="ATPase_F1/V1/A1_a/bsu_nucl-bd"/>
</dbReference>
<dbReference type="InterPro" id="IPR027417">
    <property type="entry name" value="P-loop_NTPase"/>
</dbReference>
<dbReference type="NCBIfam" id="TIGR00962">
    <property type="entry name" value="atpA"/>
    <property type="match status" value="1"/>
</dbReference>
<dbReference type="NCBIfam" id="NF009884">
    <property type="entry name" value="PRK13343.1"/>
    <property type="match status" value="1"/>
</dbReference>
<dbReference type="PANTHER" id="PTHR48082">
    <property type="entry name" value="ATP SYNTHASE SUBUNIT ALPHA, MITOCHONDRIAL"/>
    <property type="match status" value="1"/>
</dbReference>
<dbReference type="PANTHER" id="PTHR48082:SF2">
    <property type="entry name" value="ATP SYNTHASE SUBUNIT ALPHA, MITOCHONDRIAL"/>
    <property type="match status" value="1"/>
</dbReference>
<dbReference type="Pfam" id="PF00006">
    <property type="entry name" value="ATP-synt_ab"/>
    <property type="match status" value="1"/>
</dbReference>
<dbReference type="Pfam" id="PF00306">
    <property type="entry name" value="ATP-synt_ab_C"/>
    <property type="match status" value="1"/>
</dbReference>
<dbReference type="Pfam" id="PF02874">
    <property type="entry name" value="ATP-synt_ab_N"/>
    <property type="match status" value="1"/>
</dbReference>
<dbReference type="PIRSF" id="PIRSF039088">
    <property type="entry name" value="F_ATPase_subunit_alpha"/>
    <property type="match status" value="1"/>
</dbReference>
<dbReference type="SUPFAM" id="SSF47917">
    <property type="entry name" value="C-terminal domain of alpha and beta subunits of F1 ATP synthase"/>
    <property type="match status" value="1"/>
</dbReference>
<dbReference type="SUPFAM" id="SSF50615">
    <property type="entry name" value="N-terminal domain of alpha and beta subunits of F1 ATP synthase"/>
    <property type="match status" value="1"/>
</dbReference>
<dbReference type="SUPFAM" id="SSF52540">
    <property type="entry name" value="P-loop containing nucleoside triphosphate hydrolases"/>
    <property type="match status" value="1"/>
</dbReference>
<dbReference type="PROSITE" id="PS00152">
    <property type="entry name" value="ATPASE_ALPHA_BETA"/>
    <property type="match status" value="1"/>
</dbReference>
<comment type="function">
    <text evidence="2">Produces ATP from ADP in the presence of a proton gradient across the membrane. The alpha chain is a regulatory subunit.</text>
</comment>
<comment type="catalytic activity">
    <reaction evidence="2">
        <text>ATP + H2O + 4 H(+)(in) = ADP + phosphate + 5 H(+)(out)</text>
        <dbReference type="Rhea" id="RHEA:57720"/>
        <dbReference type="ChEBI" id="CHEBI:15377"/>
        <dbReference type="ChEBI" id="CHEBI:15378"/>
        <dbReference type="ChEBI" id="CHEBI:30616"/>
        <dbReference type="ChEBI" id="CHEBI:43474"/>
        <dbReference type="ChEBI" id="CHEBI:456216"/>
        <dbReference type="EC" id="7.1.2.2"/>
    </reaction>
</comment>
<comment type="subunit">
    <text evidence="1">F-type ATPases have 2 components, CF(1) - the catalytic core - and CF(0) - the membrane proton channel. CF(1) has five subunits: alpha(3), beta(3), gamma(1), delta(1), epsilon(1). CF(0) has four main subunits: a(1), b(1), b'(1) and c(9-12) (By similarity).</text>
</comment>
<comment type="subcellular location">
    <subcellularLocation>
        <location evidence="2">Cell inner membrane</location>
        <topology evidence="2">Peripheral membrane protein</topology>
    </subcellularLocation>
</comment>
<comment type="similarity">
    <text evidence="2">Belongs to the ATPase alpha/beta chains family.</text>
</comment>
<organism>
    <name type="scientific">Roseobacter denitrificans (strain ATCC 33942 / OCh 114)</name>
    <name type="common">Erythrobacter sp. (strain OCh 114)</name>
    <name type="synonym">Roseobacter denitrificans</name>
    <dbReference type="NCBI Taxonomy" id="375451"/>
    <lineage>
        <taxon>Bacteria</taxon>
        <taxon>Pseudomonadati</taxon>
        <taxon>Pseudomonadota</taxon>
        <taxon>Alphaproteobacteria</taxon>
        <taxon>Rhodobacterales</taxon>
        <taxon>Roseobacteraceae</taxon>
        <taxon>Roseobacter</taxon>
    </lineage>
</organism>
<sequence length="512" mass="54766">MGIQAAEISAILKDQIKNFGQEAEVAEVGRVLSVGDGIARVYGLDNVQAGEMVEFPGGIQGMALNLESDNVGVVIFGSDRDIKEGDTVKRTNSIVSVPTGDELLGRVVDGLGNPIDGKGPIKTKTTSVADVKAPGIIPRKSVHEPMATGLKAVDSMIPIGRGQRELIIGDRQTGKTAVALDAILNQKSYNDAAGDDESKKLYCVYVAIGQKRSTVAQLVKKLEETGAINYSIVVAATASEPAPMQFLAPYSATAMAEHFRDNGRHALIVYDDLSKQAVSYRQMSLLLRRPPGREAYPGDVFYLHSRLLERSAKLGDDAGNGSLTALPIIETQGGDVSAFIPTNVISITDGQIFLETELFYQGIRPAVNTGLSVSRVGSSAQTSAMSSVAGPVKLSLAQYREMAAFAQFGSDLDASTQQLLARGARLTELMKQPQYSPLTNAEIVCVIFAGTNGFLDKVDVKDVGRFEEALLNHMRSKHSDVLDWITNEDPKIKGDAADKLKAAISEFASDFA</sequence>
<proteinExistence type="inferred from homology"/>
<feature type="chain" id="PRO_0000256109" description="ATP synthase subunit alpha">
    <location>
        <begin position="1"/>
        <end position="512"/>
    </location>
</feature>
<feature type="binding site" evidence="2">
    <location>
        <begin position="169"/>
        <end position="176"/>
    </location>
    <ligand>
        <name>ATP</name>
        <dbReference type="ChEBI" id="CHEBI:30616"/>
    </ligand>
</feature>
<feature type="site" description="Required for activity" evidence="2">
    <location>
        <position position="372"/>
    </location>
</feature>
<gene>
    <name evidence="2" type="primary">atpA</name>
    <name type="ordered locus">RD1_3535</name>
</gene>